<sequence>MKTIIAAYSGVLRGTGSSLLSAVHDLPNIPWLSKSSVVRHLQIISVLQWVLSFLILGVACTAVLVYIFCTDLWLIAALYLTWMVLDWNTPYKGGRRSSWVRNWAVWRYFRDYFPIKLVKTHNLLPSRNYIFGYHPHGIMCLGAFCNFGTEATGVSKKFPGIKCHLATLAGNFRMPVLREYLMSGGICPVARDTIDYILSKNGTGNAVVIAVGGAAESLNCRPGKNTVTLKQRKGFVKVALQHGADLVPVYSFGENEAYKQVVFEEGSWGRWIQKKFQKYVGFAPCLFHGCSFFSSNSWGLVPYANPITTVVGEPITVPKIEQPTQKDVELYHAMYVTSLQRLFDKYKTKLGLHDSEMLEIV</sequence>
<gene>
    <name type="primary">dgat2</name>
    <name type="ORF">TEgg014n15.1</name>
</gene>
<reference key="1">
    <citation type="submission" date="2006-03" db="EMBL/GenBank/DDBJ databases">
        <authorList>
            <consortium name="Sanger Xenopus tropicalis EST/cDNA project"/>
        </authorList>
    </citation>
    <scope>NUCLEOTIDE SEQUENCE [LARGE SCALE MRNA]</scope>
    <source>
        <tissue>Egg</tissue>
    </source>
</reference>
<reference key="2">
    <citation type="submission" date="2003-12" db="EMBL/GenBank/DDBJ databases">
        <authorList>
            <consortium name="NIH - Xenopus Gene Collection (XGC) project"/>
        </authorList>
    </citation>
    <scope>NUCLEOTIDE SEQUENCE [LARGE SCALE MRNA]</scope>
    <source>
        <tissue>Embryo</tissue>
    </source>
</reference>
<accession>Q6P342</accession>
<dbReference type="EC" id="2.3.1.20" evidence="1"/>
<dbReference type="EC" id="2.3.1.76" evidence="1"/>
<dbReference type="EMBL" id="CR855594">
    <property type="protein sequence ID" value="CAJ81957.1"/>
    <property type="molecule type" value="mRNA"/>
</dbReference>
<dbReference type="EMBL" id="BC064191">
    <property type="protein sequence ID" value="AAH64191.1"/>
    <property type="molecule type" value="mRNA"/>
</dbReference>
<dbReference type="RefSeq" id="NP_989372.1">
    <property type="nucleotide sequence ID" value="NM_204041.2"/>
</dbReference>
<dbReference type="RefSeq" id="XP_031751678.1">
    <property type="nucleotide sequence ID" value="XM_031895818.1"/>
</dbReference>
<dbReference type="FunCoup" id="Q6P342">
    <property type="interactions" value="699"/>
</dbReference>
<dbReference type="STRING" id="8364.ENSXETP00000019148"/>
<dbReference type="PaxDb" id="8364-ENSXETP00000032965"/>
<dbReference type="DNASU" id="395003"/>
<dbReference type="GeneID" id="395003"/>
<dbReference type="KEGG" id="xtr:395003"/>
<dbReference type="AGR" id="Xenbase:XB-GENE-1017054"/>
<dbReference type="CTD" id="84649"/>
<dbReference type="Xenbase" id="XB-GENE-1017054">
    <property type="gene designation" value="dgat2"/>
</dbReference>
<dbReference type="eggNOG" id="KOG0831">
    <property type="taxonomic scope" value="Eukaryota"/>
</dbReference>
<dbReference type="HOGENOM" id="CLU_023995_0_0_1"/>
<dbReference type="InParanoid" id="Q6P342"/>
<dbReference type="OMA" id="IMGVACT"/>
<dbReference type="OrthoDB" id="264532at2759"/>
<dbReference type="PhylomeDB" id="Q6P342"/>
<dbReference type="TreeFam" id="TF314707"/>
<dbReference type="Reactome" id="R-XTR-1482883">
    <property type="pathway name" value="Acyl chain remodeling of DAG and TAG"/>
</dbReference>
<dbReference type="Reactome" id="R-XTR-75109">
    <property type="pathway name" value="Triglyceride biosynthesis"/>
</dbReference>
<dbReference type="UniPathway" id="UPA00282"/>
<dbReference type="Proteomes" id="UP000008143">
    <property type="component" value="Chromosome 2"/>
</dbReference>
<dbReference type="Bgee" id="ENSXETG00000025317">
    <property type="expression patterns" value="Expressed in egg cell and 17 other cell types or tissues"/>
</dbReference>
<dbReference type="GO" id="GO:0005789">
    <property type="term" value="C:endoplasmic reticulum membrane"/>
    <property type="evidence" value="ECO:0000250"/>
    <property type="project" value="UniProtKB"/>
</dbReference>
<dbReference type="GO" id="GO:0005811">
    <property type="term" value="C:lipid droplet"/>
    <property type="evidence" value="ECO:0000250"/>
    <property type="project" value="UniProtKB"/>
</dbReference>
<dbReference type="GO" id="GO:1990578">
    <property type="term" value="C:perinuclear endoplasmic reticulum membrane"/>
    <property type="evidence" value="ECO:0000250"/>
    <property type="project" value="UniProtKB"/>
</dbReference>
<dbReference type="GO" id="GO:0004144">
    <property type="term" value="F:diacylglycerol O-acyltransferase activity"/>
    <property type="evidence" value="ECO:0000250"/>
    <property type="project" value="UniProtKB"/>
</dbReference>
<dbReference type="GO" id="GO:0050252">
    <property type="term" value="F:retinol O-fatty-acyltransferase activity"/>
    <property type="evidence" value="ECO:0007669"/>
    <property type="project" value="UniProtKB-EC"/>
</dbReference>
<dbReference type="GO" id="GO:0006651">
    <property type="term" value="P:diacylglycerol biosynthetic process"/>
    <property type="evidence" value="ECO:0000250"/>
    <property type="project" value="UniProtKB"/>
</dbReference>
<dbReference type="GO" id="GO:0006071">
    <property type="term" value="P:glycerol metabolic process"/>
    <property type="evidence" value="ECO:0007669"/>
    <property type="project" value="UniProtKB-KW"/>
</dbReference>
<dbReference type="GO" id="GO:0006640">
    <property type="term" value="P:monoacylglycerol biosynthetic process"/>
    <property type="evidence" value="ECO:0000250"/>
    <property type="project" value="UniProtKB"/>
</dbReference>
<dbReference type="GO" id="GO:0019432">
    <property type="term" value="P:triglyceride biosynthetic process"/>
    <property type="evidence" value="ECO:0000250"/>
    <property type="project" value="UniProtKB"/>
</dbReference>
<dbReference type="CDD" id="cd07987">
    <property type="entry name" value="LPLAT_MGAT-like"/>
    <property type="match status" value="1"/>
</dbReference>
<dbReference type="InterPro" id="IPR007130">
    <property type="entry name" value="DAGAT"/>
</dbReference>
<dbReference type="PANTHER" id="PTHR12317">
    <property type="entry name" value="DIACYLGLYCEROL O-ACYLTRANSFERASE"/>
    <property type="match status" value="1"/>
</dbReference>
<dbReference type="PANTHER" id="PTHR12317:SF14">
    <property type="entry name" value="DIACYLGLYCEROL O-ACYLTRANSFERASE 2"/>
    <property type="match status" value="1"/>
</dbReference>
<dbReference type="Pfam" id="PF03982">
    <property type="entry name" value="DAGAT"/>
    <property type="match status" value="1"/>
</dbReference>
<evidence type="ECO:0000250" key="1">
    <source>
        <dbReference type="UniProtKB" id="Q96PD7"/>
    </source>
</evidence>
<evidence type="ECO:0000250" key="2">
    <source>
        <dbReference type="UniProtKB" id="Q9DCV3"/>
    </source>
</evidence>
<evidence type="ECO:0000255" key="3"/>
<evidence type="ECO:0000305" key="4"/>
<organism>
    <name type="scientific">Xenopus tropicalis</name>
    <name type="common">Western clawed frog</name>
    <name type="synonym">Silurana tropicalis</name>
    <dbReference type="NCBI Taxonomy" id="8364"/>
    <lineage>
        <taxon>Eukaryota</taxon>
        <taxon>Metazoa</taxon>
        <taxon>Chordata</taxon>
        <taxon>Craniata</taxon>
        <taxon>Vertebrata</taxon>
        <taxon>Euteleostomi</taxon>
        <taxon>Amphibia</taxon>
        <taxon>Batrachia</taxon>
        <taxon>Anura</taxon>
        <taxon>Pipoidea</taxon>
        <taxon>Pipidae</taxon>
        <taxon>Xenopodinae</taxon>
        <taxon>Xenopus</taxon>
        <taxon>Silurana</taxon>
    </lineage>
</organism>
<proteinExistence type="evidence at transcript level"/>
<comment type="function">
    <text evidence="1">Essential acyltransferase that catalyzes the terminal and only committed step in triacylglycerol synthesis by using diacylglycerol and fatty acyl CoA as substrates. Required for synthesis and storage of intracellular triglycerides. Probably plays a central role in cytosolic lipid accumulation (By similarity).</text>
</comment>
<comment type="catalytic activity">
    <reaction evidence="1">
        <text>an acyl-CoA + a 1,2-diacyl-sn-glycerol = a triacyl-sn-glycerol + CoA</text>
        <dbReference type="Rhea" id="RHEA:10868"/>
        <dbReference type="ChEBI" id="CHEBI:17815"/>
        <dbReference type="ChEBI" id="CHEBI:57287"/>
        <dbReference type="ChEBI" id="CHEBI:58342"/>
        <dbReference type="ChEBI" id="CHEBI:64615"/>
        <dbReference type="EC" id="2.3.1.20"/>
    </reaction>
    <physiologicalReaction direction="left-to-right" evidence="1">
        <dbReference type="Rhea" id="RHEA:10869"/>
    </physiologicalReaction>
</comment>
<comment type="catalytic activity">
    <reaction evidence="1">
        <text>all-trans-retinol + an acyl-CoA = an all-trans-retinyl ester + CoA</text>
        <dbReference type="Rhea" id="RHEA:11488"/>
        <dbReference type="ChEBI" id="CHEBI:17336"/>
        <dbReference type="ChEBI" id="CHEBI:57287"/>
        <dbReference type="ChEBI" id="CHEBI:58342"/>
        <dbReference type="ChEBI" id="CHEBI:63410"/>
        <dbReference type="EC" id="2.3.1.76"/>
    </reaction>
    <physiologicalReaction direction="left-to-right" evidence="1">
        <dbReference type="Rhea" id="RHEA:11489"/>
    </physiologicalReaction>
</comment>
<comment type="catalytic activity">
    <reaction evidence="1">
        <text>2-(9Z-octadecenoyl)-glycerol + (9Z)-octadecenoyl-CoA = 1,2-di-(9Z-octadecenoyl)-sn-glycerol + CoA</text>
        <dbReference type="Rhea" id="RHEA:37911"/>
        <dbReference type="ChEBI" id="CHEBI:52333"/>
        <dbReference type="ChEBI" id="CHEBI:57287"/>
        <dbReference type="ChEBI" id="CHEBI:57387"/>
        <dbReference type="ChEBI" id="CHEBI:73990"/>
    </reaction>
    <physiologicalReaction direction="left-to-right" evidence="1">
        <dbReference type="Rhea" id="RHEA:37912"/>
    </physiologicalReaction>
</comment>
<comment type="catalytic activity">
    <reaction evidence="1">
        <text>1,2-di-(9Z-octadecenoyl)-sn-glycerol + (9Z)-octadecenoyl-CoA = 1,2,3-tri-(9Z-octadecenoyl)-glycerol + CoA</text>
        <dbReference type="Rhea" id="RHEA:38219"/>
        <dbReference type="ChEBI" id="CHEBI:52333"/>
        <dbReference type="ChEBI" id="CHEBI:53753"/>
        <dbReference type="ChEBI" id="CHEBI:57287"/>
        <dbReference type="ChEBI" id="CHEBI:57387"/>
    </reaction>
    <physiologicalReaction direction="left-to-right" evidence="1">
        <dbReference type="Rhea" id="RHEA:38220"/>
    </physiologicalReaction>
</comment>
<comment type="catalytic activity">
    <reaction evidence="1">
        <text>all-trans-retinol + hexadecanoyl-CoA = all-trans-retinyl hexadecanoate + CoA</text>
        <dbReference type="Rhea" id="RHEA:38175"/>
        <dbReference type="ChEBI" id="CHEBI:17336"/>
        <dbReference type="ChEBI" id="CHEBI:17616"/>
        <dbReference type="ChEBI" id="CHEBI:57287"/>
        <dbReference type="ChEBI" id="CHEBI:57379"/>
    </reaction>
    <physiologicalReaction direction="left-to-right" evidence="1">
        <dbReference type="Rhea" id="RHEA:38176"/>
    </physiologicalReaction>
</comment>
<comment type="catalytic activity">
    <reaction evidence="1">
        <text>1-O-(9Z-octadecenyl)-glycerol + (9Z)-octadecenoyl-CoA = 1-O-(9Z-octadecyl)-3-(9Z-octadecenoyl)-glycerol + CoA</text>
        <dbReference type="Rhea" id="RHEA:55340"/>
        <dbReference type="ChEBI" id="CHEBI:34116"/>
        <dbReference type="ChEBI" id="CHEBI:57287"/>
        <dbReference type="ChEBI" id="CHEBI:57387"/>
        <dbReference type="ChEBI" id="CHEBI:197429"/>
    </reaction>
    <physiologicalReaction direction="left-to-right" evidence="1">
        <dbReference type="Rhea" id="RHEA:55341"/>
    </physiologicalReaction>
</comment>
<comment type="catalytic activity">
    <reaction evidence="1">
        <text>1-(9Z-octadecenoyl)-glycerol + (9Z)-octadecenoyl-CoA = 1,2-di-(9Z-octadecenoyl)-glycerol + CoA</text>
        <dbReference type="Rhea" id="RHEA:37915"/>
        <dbReference type="ChEBI" id="CHEBI:52323"/>
        <dbReference type="ChEBI" id="CHEBI:57287"/>
        <dbReference type="ChEBI" id="CHEBI:57387"/>
        <dbReference type="ChEBI" id="CHEBI:75342"/>
    </reaction>
    <physiologicalReaction direction="left-to-right" evidence="1">
        <dbReference type="Rhea" id="RHEA:37916"/>
    </physiologicalReaction>
</comment>
<comment type="catalytic activity">
    <reaction evidence="2">
        <text>1,2-di-(9Z-octadecenoyl)-sn-glycerol + hexadecanoyl-CoA = 1,2-di-(9Z)-octadecenoyl-3-hexadecanoyl-sn-glycerol + CoA</text>
        <dbReference type="Rhea" id="RHEA:38163"/>
        <dbReference type="ChEBI" id="CHEBI:52333"/>
        <dbReference type="ChEBI" id="CHEBI:57287"/>
        <dbReference type="ChEBI" id="CHEBI:57379"/>
        <dbReference type="ChEBI" id="CHEBI:75583"/>
    </reaction>
    <physiologicalReaction direction="left-to-right" evidence="2">
        <dbReference type="Rhea" id="RHEA:38164"/>
    </physiologicalReaction>
</comment>
<comment type="catalytic activity">
    <reaction evidence="2">
        <text>1,3-di-(9Z-octadecenoyl)-glycerol + (9Z)-octadecenoyl-CoA = 1,2,3-tri-(9Z-octadecenoyl)-glycerol + CoA</text>
        <dbReference type="Rhea" id="RHEA:38435"/>
        <dbReference type="ChEBI" id="CHEBI:53753"/>
        <dbReference type="ChEBI" id="CHEBI:57287"/>
        <dbReference type="ChEBI" id="CHEBI:57387"/>
        <dbReference type="ChEBI" id="CHEBI:75735"/>
    </reaction>
    <physiologicalReaction direction="left-to-right" evidence="2">
        <dbReference type="Rhea" id="RHEA:38436"/>
    </physiologicalReaction>
</comment>
<comment type="catalytic activity">
    <reaction evidence="2">
        <text>2,3-di-(9Z)-octadecenoyl-sn-glycerol + (9Z)-octadecenoyl-CoA = 1,2,3-tri-(9Z-octadecenoyl)-glycerol + CoA</text>
        <dbReference type="Rhea" id="RHEA:38439"/>
        <dbReference type="ChEBI" id="CHEBI:53753"/>
        <dbReference type="ChEBI" id="CHEBI:57287"/>
        <dbReference type="ChEBI" id="CHEBI:57387"/>
        <dbReference type="ChEBI" id="CHEBI:75824"/>
    </reaction>
    <physiologicalReaction direction="left-to-right" evidence="2">
        <dbReference type="Rhea" id="RHEA:38440"/>
    </physiologicalReaction>
</comment>
<comment type="catalytic activity">
    <reaction evidence="2">
        <text>2-(9Z-octadecenoyl)-glycerol + hexadecanoyl-CoA = 1-hexadecanoyl-2-(9Z-octadecenoyl)-sn-glycerol + CoA</text>
        <dbReference type="Rhea" id="RHEA:38071"/>
        <dbReference type="ChEBI" id="CHEBI:57287"/>
        <dbReference type="ChEBI" id="CHEBI:57379"/>
        <dbReference type="ChEBI" id="CHEBI:73990"/>
        <dbReference type="ChEBI" id="CHEBI:75466"/>
    </reaction>
    <physiologicalReaction direction="left-to-right" evidence="2">
        <dbReference type="Rhea" id="RHEA:38072"/>
    </physiologicalReaction>
</comment>
<comment type="pathway">
    <text>Glycerolipid metabolism; triacylglycerol biosynthesis.</text>
</comment>
<comment type="subcellular location">
    <subcellularLocation>
        <location evidence="1">Endoplasmic reticulum membrane</location>
        <topology evidence="1">Multi-pass membrane protein</topology>
    </subcellularLocation>
    <subcellularLocation>
        <location evidence="1">Lipid droplet</location>
    </subcellularLocation>
    <subcellularLocation>
        <location evidence="1">Cytoplasm</location>
        <location evidence="1">Perinuclear region</location>
    </subcellularLocation>
</comment>
<comment type="similarity">
    <text evidence="4">Belongs to the diacylglycerol acyltransferase family.</text>
</comment>
<keyword id="KW-0012">Acyltransferase</keyword>
<keyword id="KW-0963">Cytoplasm</keyword>
<keyword id="KW-0256">Endoplasmic reticulum</keyword>
<keyword id="KW-0319">Glycerol metabolism</keyword>
<keyword id="KW-0444">Lipid biosynthesis</keyword>
<keyword id="KW-0551">Lipid droplet</keyword>
<keyword id="KW-0443">Lipid metabolism</keyword>
<keyword id="KW-0472">Membrane</keyword>
<keyword id="KW-1185">Reference proteome</keyword>
<keyword id="KW-0808">Transferase</keyword>
<keyword id="KW-0812">Transmembrane</keyword>
<keyword id="KW-1133">Transmembrane helix</keyword>
<feature type="chain" id="PRO_0000249050" description="Diacylglycerol O-acyltransferase 2">
    <location>
        <begin position="1"/>
        <end position="361"/>
    </location>
</feature>
<feature type="topological domain" description="Cytoplasmic" evidence="3">
    <location>
        <begin position="1"/>
        <end position="42"/>
    </location>
</feature>
<feature type="transmembrane region" description="Helical" evidence="3">
    <location>
        <begin position="43"/>
        <end position="61"/>
    </location>
</feature>
<feature type="topological domain" description="Lumenal" evidence="3">
    <location>
        <begin position="62"/>
        <end position="65"/>
    </location>
</feature>
<feature type="transmembrane region" description="Helical" evidence="3">
    <location>
        <begin position="66"/>
        <end position="85"/>
    </location>
</feature>
<feature type="topological domain" description="Cytoplasmic" evidence="3">
    <location>
        <begin position="86"/>
        <end position="361"/>
    </location>
</feature>
<name>DGAT2_XENTR</name>
<protein>
    <recommendedName>
        <fullName evidence="4">Diacylglycerol O-acyltransferase 2</fullName>
        <ecNumber evidence="1">2.3.1.20</ecNumber>
    </recommendedName>
    <alternativeName>
        <fullName evidence="1">Acyl-CoA retinol O-fatty-acyltransferase</fullName>
        <shortName evidence="1">ARAT</shortName>
        <shortName evidence="1">Retinol O-fatty-acyltransferase</shortName>
        <ecNumber evidence="1">2.3.1.76</ecNumber>
    </alternativeName>
    <alternativeName>
        <fullName>Diglyceride acyltransferase 2</fullName>
    </alternativeName>
</protein>